<proteinExistence type="inferred from homology"/>
<evidence type="ECO:0000255" key="1">
    <source>
        <dbReference type="HAMAP-Rule" id="MF_00607"/>
    </source>
</evidence>
<gene>
    <name evidence="1" type="primary">rsmA</name>
    <name evidence="1" type="synonym">ksgA</name>
    <name type="ordered locus">ROP_57330</name>
</gene>
<protein>
    <recommendedName>
        <fullName evidence="1">Ribosomal RNA small subunit methyltransferase A</fullName>
        <ecNumber evidence="1">2.1.1.182</ecNumber>
    </recommendedName>
    <alternativeName>
        <fullName evidence="1">16S rRNA (adenine(1518)-N(6)/adenine(1519)-N(6))-dimethyltransferase</fullName>
    </alternativeName>
    <alternativeName>
        <fullName evidence="1">16S rRNA dimethyladenosine transferase</fullName>
    </alternativeName>
    <alternativeName>
        <fullName evidence="1">16S rRNA dimethylase</fullName>
    </alternativeName>
    <alternativeName>
        <fullName evidence="1">S-adenosylmethionine-6-N', N'-adenosyl(rRNA) dimethyltransferase</fullName>
    </alternativeName>
</protein>
<keyword id="KW-0963">Cytoplasm</keyword>
<keyword id="KW-0489">Methyltransferase</keyword>
<keyword id="KW-0694">RNA-binding</keyword>
<keyword id="KW-0698">rRNA processing</keyword>
<keyword id="KW-0949">S-adenosyl-L-methionine</keyword>
<keyword id="KW-0808">Transferase</keyword>
<feature type="chain" id="PRO_1000194396" description="Ribosomal RNA small subunit methyltransferase A">
    <location>
        <begin position="1"/>
        <end position="296"/>
    </location>
</feature>
<feature type="binding site" evidence="1">
    <location>
        <position position="40"/>
    </location>
    <ligand>
        <name>S-adenosyl-L-methionine</name>
        <dbReference type="ChEBI" id="CHEBI:59789"/>
    </ligand>
</feature>
<feature type="binding site" evidence="1">
    <location>
        <position position="42"/>
    </location>
    <ligand>
        <name>S-adenosyl-L-methionine</name>
        <dbReference type="ChEBI" id="CHEBI:59789"/>
    </ligand>
</feature>
<feature type="binding site" evidence="1">
    <location>
        <position position="67"/>
    </location>
    <ligand>
        <name>S-adenosyl-L-methionine</name>
        <dbReference type="ChEBI" id="CHEBI:59789"/>
    </ligand>
</feature>
<feature type="binding site" evidence="1">
    <location>
        <position position="88"/>
    </location>
    <ligand>
        <name>S-adenosyl-L-methionine</name>
        <dbReference type="ChEBI" id="CHEBI:59789"/>
    </ligand>
</feature>
<feature type="binding site" evidence="1">
    <location>
        <position position="118"/>
    </location>
    <ligand>
        <name>S-adenosyl-L-methionine</name>
        <dbReference type="ChEBI" id="CHEBI:59789"/>
    </ligand>
</feature>
<feature type="binding site" evidence="1">
    <location>
        <position position="137"/>
    </location>
    <ligand>
        <name>S-adenosyl-L-methionine</name>
        <dbReference type="ChEBI" id="CHEBI:59789"/>
    </ligand>
</feature>
<sequence>MSDAEVPPAARGQAALLGPAEVRALAEEFGVRPTKQLGQNFVHDANTVRRIVATAGVGREDTVLEVGPGLGSLTLALLDVVDRVIAVEIDPNLAARLPVTVADRAPDLADRLTVVGADAMRVKPSEIPGEPTALVANLPYNVAVPVLLHLFSELPSLRTALVMVQAEVADRLAASPGSKIYGVPSVKANFFGAVRRAGAVGRAVFWPVPKVESGLVRIDRYAEPPWPVDDENRRRVFAVIDAAFAQRRKTLRAALGGWAGSPAEAERRLLEAGIPPSSRGETLDAAAFVRLAATHP</sequence>
<name>RSMA_RHOOB</name>
<reference key="1">
    <citation type="submission" date="2009-03" db="EMBL/GenBank/DDBJ databases">
        <title>Comparison of the complete genome sequences of Rhodococcus erythropolis PR4 and Rhodococcus opacus B4.</title>
        <authorList>
            <person name="Takarada H."/>
            <person name="Sekine M."/>
            <person name="Hosoyama A."/>
            <person name="Yamada R."/>
            <person name="Fujisawa T."/>
            <person name="Omata S."/>
            <person name="Shimizu A."/>
            <person name="Tsukatani N."/>
            <person name="Tanikawa S."/>
            <person name="Fujita N."/>
            <person name="Harayama S."/>
        </authorList>
    </citation>
    <scope>NUCLEOTIDE SEQUENCE [LARGE SCALE GENOMIC DNA]</scope>
    <source>
        <strain>B4</strain>
    </source>
</reference>
<comment type="function">
    <text evidence="1">Specifically dimethylates two adjacent adenosines (A1518 and A1519) in the loop of a conserved hairpin near the 3'-end of 16S rRNA in the 30S particle. May play a critical role in biogenesis of 30S subunits.</text>
</comment>
<comment type="catalytic activity">
    <reaction evidence="1">
        <text>adenosine(1518)/adenosine(1519) in 16S rRNA + 4 S-adenosyl-L-methionine = N(6)-dimethyladenosine(1518)/N(6)-dimethyladenosine(1519) in 16S rRNA + 4 S-adenosyl-L-homocysteine + 4 H(+)</text>
        <dbReference type="Rhea" id="RHEA:19609"/>
        <dbReference type="Rhea" id="RHEA-COMP:10232"/>
        <dbReference type="Rhea" id="RHEA-COMP:10233"/>
        <dbReference type="ChEBI" id="CHEBI:15378"/>
        <dbReference type="ChEBI" id="CHEBI:57856"/>
        <dbReference type="ChEBI" id="CHEBI:59789"/>
        <dbReference type="ChEBI" id="CHEBI:74411"/>
        <dbReference type="ChEBI" id="CHEBI:74493"/>
        <dbReference type="EC" id="2.1.1.182"/>
    </reaction>
</comment>
<comment type="subcellular location">
    <subcellularLocation>
        <location evidence="1">Cytoplasm</location>
    </subcellularLocation>
</comment>
<comment type="similarity">
    <text evidence="1">Belongs to the class I-like SAM-binding methyltransferase superfamily. rRNA adenine N(6)-methyltransferase family. RsmA subfamily.</text>
</comment>
<organism>
    <name type="scientific">Rhodococcus opacus (strain B4)</name>
    <dbReference type="NCBI Taxonomy" id="632772"/>
    <lineage>
        <taxon>Bacteria</taxon>
        <taxon>Bacillati</taxon>
        <taxon>Actinomycetota</taxon>
        <taxon>Actinomycetes</taxon>
        <taxon>Mycobacteriales</taxon>
        <taxon>Nocardiaceae</taxon>
        <taxon>Rhodococcus</taxon>
    </lineage>
</organism>
<dbReference type="EC" id="2.1.1.182" evidence="1"/>
<dbReference type="EMBL" id="AP011115">
    <property type="protein sequence ID" value="BAH53980.1"/>
    <property type="molecule type" value="Genomic_DNA"/>
</dbReference>
<dbReference type="RefSeq" id="WP_015889474.1">
    <property type="nucleotide sequence ID" value="NC_012522.1"/>
</dbReference>
<dbReference type="SMR" id="C1AXY5"/>
<dbReference type="STRING" id="632772.ROP_57330"/>
<dbReference type="KEGG" id="rop:ROP_57330"/>
<dbReference type="PATRIC" id="fig|632772.20.peg.5987"/>
<dbReference type="HOGENOM" id="CLU_041220_1_1_11"/>
<dbReference type="OrthoDB" id="9814755at2"/>
<dbReference type="Proteomes" id="UP000002212">
    <property type="component" value="Chromosome"/>
</dbReference>
<dbReference type="GO" id="GO:0005829">
    <property type="term" value="C:cytosol"/>
    <property type="evidence" value="ECO:0007669"/>
    <property type="project" value="TreeGrafter"/>
</dbReference>
<dbReference type="GO" id="GO:0052908">
    <property type="term" value="F:16S rRNA (adenine(1518)-N(6)/adenine(1519)-N(6))-dimethyltransferase activity"/>
    <property type="evidence" value="ECO:0007669"/>
    <property type="project" value="UniProtKB-EC"/>
</dbReference>
<dbReference type="GO" id="GO:0003723">
    <property type="term" value="F:RNA binding"/>
    <property type="evidence" value="ECO:0007669"/>
    <property type="project" value="UniProtKB-KW"/>
</dbReference>
<dbReference type="CDD" id="cd02440">
    <property type="entry name" value="AdoMet_MTases"/>
    <property type="match status" value="1"/>
</dbReference>
<dbReference type="FunFam" id="1.10.8.100:FF:000003">
    <property type="entry name" value="Ribosomal RNA small subunit methyltransferase A"/>
    <property type="match status" value="1"/>
</dbReference>
<dbReference type="FunFam" id="3.40.50.150:FF:000023">
    <property type="entry name" value="Ribosomal RNA small subunit methyltransferase A"/>
    <property type="match status" value="1"/>
</dbReference>
<dbReference type="Gene3D" id="1.10.8.100">
    <property type="entry name" value="Ribosomal RNA adenine dimethylase-like, domain 2"/>
    <property type="match status" value="1"/>
</dbReference>
<dbReference type="Gene3D" id="3.40.50.150">
    <property type="entry name" value="Vaccinia Virus protein VP39"/>
    <property type="match status" value="1"/>
</dbReference>
<dbReference type="HAMAP" id="MF_00607">
    <property type="entry name" value="16SrRNA_methyltr_A"/>
    <property type="match status" value="1"/>
</dbReference>
<dbReference type="InterPro" id="IPR001737">
    <property type="entry name" value="KsgA/Erm"/>
</dbReference>
<dbReference type="InterPro" id="IPR023165">
    <property type="entry name" value="rRNA_Ade_diMease-like_C"/>
</dbReference>
<dbReference type="InterPro" id="IPR020596">
    <property type="entry name" value="rRNA_Ade_Mease_Trfase_CS"/>
</dbReference>
<dbReference type="InterPro" id="IPR020598">
    <property type="entry name" value="rRNA_Ade_methylase_Trfase_N"/>
</dbReference>
<dbReference type="InterPro" id="IPR011530">
    <property type="entry name" value="rRNA_adenine_dimethylase"/>
</dbReference>
<dbReference type="InterPro" id="IPR029063">
    <property type="entry name" value="SAM-dependent_MTases_sf"/>
</dbReference>
<dbReference type="NCBIfam" id="TIGR00755">
    <property type="entry name" value="ksgA"/>
    <property type="match status" value="1"/>
</dbReference>
<dbReference type="PANTHER" id="PTHR11727">
    <property type="entry name" value="DIMETHYLADENOSINE TRANSFERASE"/>
    <property type="match status" value="1"/>
</dbReference>
<dbReference type="PANTHER" id="PTHR11727:SF7">
    <property type="entry name" value="DIMETHYLADENOSINE TRANSFERASE-RELATED"/>
    <property type="match status" value="1"/>
</dbReference>
<dbReference type="Pfam" id="PF00398">
    <property type="entry name" value="RrnaAD"/>
    <property type="match status" value="1"/>
</dbReference>
<dbReference type="SMART" id="SM00650">
    <property type="entry name" value="rADc"/>
    <property type="match status" value="1"/>
</dbReference>
<dbReference type="SUPFAM" id="SSF53335">
    <property type="entry name" value="S-adenosyl-L-methionine-dependent methyltransferases"/>
    <property type="match status" value="1"/>
</dbReference>
<dbReference type="PROSITE" id="PS01131">
    <property type="entry name" value="RRNA_A_DIMETH"/>
    <property type="match status" value="1"/>
</dbReference>
<dbReference type="PROSITE" id="PS51689">
    <property type="entry name" value="SAM_RNA_A_N6_MT"/>
    <property type="match status" value="1"/>
</dbReference>
<accession>C1AXY5</accession>